<protein>
    <recommendedName>
        <fullName evidence="1">Acetylglutamate kinase</fullName>
        <ecNumber evidence="1">2.7.2.8</ecNumber>
    </recommendedName>
    <alternativeName>
        <fullName evidence="1">N-acetyl-L-glutamate 5-phosphotransferase</fullName>
    </alternativeName>
    <alternativeName>
        <fullName evidence="1">NAG kinase</fullName>
        <shortName evidence="1">NAGK</shortName>
    </alternativeName>
</protein>
<evidence type="ECO:0000255" key="1">
    <source>
        <dbReference type="HAMAP-Rule" id="MF_00082"/>
    </source>
</evidence>
<keyword id="KW-0028">Amino-acid biosynthesis</keyword>
<keyword id="KW-0055">Arginine biosynthesis</keyword>
<keyword id="KW-0067">ATP-binding</keyword>
<keyword id="KW-0963">Cytoplasm</keyword>
<keyword id="KW-0418">Kinase</keyword>
<keyword id="KW-0547">Nucleotide-binding</keyword>
<keyword id="KW-0808">Transferase</keyword>
<dbReference type="EC" id="2.7.2.8" evidence="1"/>
<dbReference type="EMBL" id="AP009510">
    <property type="protein sequence ID" value="BAG14047.1"/>
    <property type="molecule type" value="Genomic_DNA"/>
</dbReference>
<dbReference type="RefSeq" id="WP_015423572.1">
    <property type="nucleotide sequence ID" value="NC_020419.1"/>
</dbReference>
<dbReference type="SMR" id="B1H0L5"/>
<dbReference type="STRING" id="471821.TGRD_564"/>
<dbReference type="KEGG" id="rsd:TGRD_564"/>
<dbReference type="PATRIC" id="fig|471821.5.peg.914"/>
<dbReference type="HOGENOM" id="CLU_053680_0_0_0"/>
<dbReference type="UniPathway" id="UPA00068">
    <property type="reaction ID" value="UER00107"/>
</dbReference>
<dbReference type="Proteomes" id="UP000001691">
    <property type="component" value="Chromosome"/>
</dbReference>
<dbReference type="GO" id="GO:0005737">
    <property type="term" value="C:cytoplasm"/>
    <property type="evidence" value="ECO:0007669"/>
    <property type="project" value="UniProtKB-SubCell"/>
</dbReference>
<dbReference type="GO" id="GO:0003991">
    <property type="term" value="F:acetylglutamate kinase activity"/>
    <property type="evidence" value="ECO:0007669"/>
    <property type="project" value="UniProtKB-UniRule"/>
</dbReference>
<dbReference type="GO" id="GO:0005524">
    <property type="term" value="F:ATP binding"/>
    <property type="evidence" value="ECO:0007669"/>
    <property type="project" value="UniProtKB-UniRule"/>
</dbReference>
<dbReference type="GO" id="GO:0042450">
    <property type="term" value="P:arginine biosynthetic process via ornithine"/>
    <property type="evidence" value="ECO:0007669"/>
    <property type="project" value="UniProtKB-UniRule"/>
</dbReference>
<dbReference type="GO" id="GO:0006526">
    <property type="term" value="P:L-arginine biosynthetic process"/>
    <property type="evidence" value="ECO:0007669"/>
    <property type="project" value="UniProtKB-UniPathway"/>
</dbReference>
<dbReference type="CDD" id="cd04238">
    <property type="entry name" value="AAK_NAGK-like"/>
    <property type="match status" value="1"/>
</dbReference>
<dbReference type="FunFam" id="3.40.1160.10:FF:000004">
    <property type="entry name" value="Acetylglutamate kinase"/>
    <property type="match status" value="1"/>
</dbReference>
<dbReference type="Gene3D" id="3.40.1160.10">
    <property type="entry name" value="Acetylglutamate kinase-like"/>
    <property type="match status" value="1"/>
</dbReference>
<dbReference type="HAMAP" id="MF_00082">
    <property type="entry name" value="ArgB"/>
    <property type="match status" value="1"/>
</dbReference>
<dbReference type="InterPro" id="IPR036393">
    <property type="entry name" value="AceGlu_kinase-like_sf"/>
</dbReference>
<dbReference type="InterPro" id="IPR004662">
    <property type="entry name" value="AcgluKinase_fam"/>
</dbReference>
<dbReference type="InterPro" id="IPR037528">
    <property type="entry name" value="ArgB"/>
</dbReference>
<dbReference type="InterPro" id="IPR001048">
    <property type="entry name" value="Asp/Glu/Uridylate_kinase"/>
</dbReference>
<dbReference type="InterPro" id="IPR001057">
    <property type="entry name" value="Glu/AcGlu_kinase"/>
</dbReference>
<dbReference type="NCBIfam" id="TIGR00761">
    <property type="entry name" value="argB"/>
    <property type="match status" value="1"/>
</dbReference>
<dbReference type="PANTHER" id="PTHR23342">
    <property type="entry name" value="N-ACETYLGLUTAMATE SYNTHASE"/>
    <property type="match status" value="1"/>
</dbReference>
<dbReference type="PANTHER" id="PTHR23342:SF0">
    <property type="entry name" value="N-ACETYLGLUTAMATE SYNTHASE, MITOCHONDRIAL"/>
    <property type="match status" value="1"/>
</dbReference>
<dbReference type="Pfam" id="PF00696">
    <property type="entry name" value="AA_kinase"/>
    <property type="match status" value="1"/>
</dbReference>
<dbReference type="PIRSF" id="PIRSF000728">
    <property type="entry name" value="NAGK"/>
    <property type="match status" value="1"/>
</dbReference>
<dbReference type="PRINTS" id="PR00474">
    <property type="entry name" value="GLU5KINASE"/>
</dbReference>
<dbReference type="SUPFAM" id="SSF53633">
    <property type="entry name" value="Carbamate kinase-like"/>
    <property type="match status" value="1"/>
</dbReference>
<name>ARGB_ENDTX</name>
<proteinExistence type="inferred from homology"/>
<feature type="chain" id="PRO_1000202574" description="Acetylglutamate kinase">
    <location>
        <begin position="1"/>
        <end position="249"/>
    </location>
</feature>
<feature type="binding site" evidence="1">
    <location>
        <begin position="42"/>
        <end position="43"/>
    </location>
    <ligand>
        <name>substrate</name>
    </ligand>
</feature>
<feature type="binding site" evidence="1">
    <location>
        <position position="64"/>
    </location>
    <ligand>
        <name>substrate</name>
    </ligand>
</feature>
<feature type="binding site" evidence="1">
    <location>
        <position position="155"/>
    </location>
    <ligand>
        <name>substrate</name>
    </ligand>
</feature>
<feature type="site" description="Transition state stabilizer" evidence="1">
    <location>
        <position position="8"/>
    </location>
</feature>
<feature type="site" description="Transition state stabilizer" evidence="1">
    <location>
        <position position="215"/>
    </location>
</feature>
<accession>B1H0L5</accession>
<gene>
    <name evidence="1" type="primary">argB</name>
    <name type="ordered locus">TGRD_564</name>
</gene>
<reference key="1">
    <citation type="journal article" date="2008" name="Proc. Natl. Acad. Sci. U.S.A.">
        <title>Complete genome of the uncultured termite group 1 bacteria in a single host protist cell.</title>
        <authorList>
            <person name="Hongoh Y."/>
            <person name="Sharma V.K."/>
            <person name="Prakash T."/>
            <person name="Noda S."/>
            <person name="Taylor T.D."/>
            <person name="Kudo T."/>
            <person name="Sakaki Y."/>
            <person name="Toyoda A."/>
            <person name="Hattori M."/>
            <person name="Ohkuma M."/>
        </authorList>
    </citation>
    <scope>NUCLEOTIDE SEQUENCE [LARGE SCALE GENOMIC DNA]</scope>
</reference>
<comment type="function">
    <text evidence="1">Catalyzes the ATP-dependent phosphorylation of N-acetyl-L-glutamate.</text>
</comment>
<comment type="catalytic activity">
    <reaction evidence="1">
        <text>N-acetyl-L-glutamate + ATP = N-acetyl-L-glutamyl 5-phosphate + ADP</text>
        <dbReference type="Rhea" id="RHEA:14629"/>
        <dbReference type="ChEBI" id="CHEBI:30616"/>
        <dbReference type="ChEBI" id="CHEBI:44337"/>
        <dbReference type="ChEBI" id="CHEBI:57936"/>
        <dbReference type="ChEBI" id="CHEBI:456216"/>
        <dbReference type="EC" id="2.7.2.8"/>
    </reaction>
</comment>
<comment type="pathway">
    <text evidence="1">Amino-acid biosynthesis; L-arginine biosynthesis; N(2)-acetyl-L-ornithine from L-glutamate: step 2/4.</text>
</comment>
<comment type="subcellular location">
    <subcellularLocation>
        <location evidence="1">Cytoplasm</location>
    </subcellularLocation>
</comment>
<comment type="similarity">
    <text evidence="1">Belongs to the acetylglutamate kinase family. ArgB subfamily.</text>
</comment>
<organism>
    <name type="scientific">Endomicrobium trichonymphae</name>
    <dbReference type="NCBI Taxonomy" id="1408204"/>
    <lineage>
        <taxon>Bacteria</taxon>
        <taxon>Pseudomonadati</taxon>
        <taxon>Elusimicrobiota</taxon>
        <taxon>Endomicrobiia</taxon>
        <taxon>Endomicrobiales</taxon>
        <taxon>Endomicrobiaceae</taxon>
        <taxon>Candidatus Endomicrobiellum</taxon>
    </lineage>
</organism>
<sequence length="249" mass="26755">MSELTVVKFGGSLTENPQAQNKFLEELTLISKRQNIILVHGGGPEINALLEKFAITSRFVNGLRFTDADTLGVVELALSGKVNRVLTTGLIKNGANAVGISGKDGKSVICRQVEYLGFVGEPVKVNRKLIDILIKSRFLPVIASIAADVEGNIMNVNADTLAASIAVAFKAQKLIFLTDVAGVFDKNNNIIKEIKIKEINSLIEDKTITGGMIPKIKGCAESVKKGLKEVWIAEGISGIQKIKGTVIKK</sequence>